<name>IOVO_LOPCU</name>
<feature type="chain" id="PRO_0000073143" description="Ovomucoid">
    <location>
        <begin position="1" status="less than"/>
        <end position="54" status="greater than"/>
    </location>
</feature>
<feature type="domain" description="Kazal-like" evidence="1">
    <location>
        <begin position="4"/>
        <end position="54"/>
    </location>
</feature>
<feature type="site" description="Reactive bond 3">
    <location>
        <begin position="16"/>
        <end position="17"/>
    </location>
</feature>
<feature type="glycosylation site" description="N-linked (GlcNAc...) asparagine">
    <location>
        <position position="43"/>
    </location>
</feature>
<feature type="disulfide bond">
    <location>
        <begin position="6"/>
        <end position="36"/>
    </location>
</feature>
<feature type="disulfide bond">
    <location>
        <begin position="14"/>
        <end position="33"/>
    </location>
</feature>
<feature type="disulfide bond">
    <location>
        <begin position="22"/>
        <end position="54"/>
    </location>
</feature>
<feature type="non-terminal residue">
    <location>
        <position position="1"/>
    </location>
</feature>
<feature type="non-terminal residue">
    <location>
        <position position="54"/>
    </location>
</feature>
<accession>P68154</accession>
<accession>P05576</accession>
<dbReference type="SMR" id="P68154"/>
<dbReference type="GO" id="GO:0005576">
    <property type="term" value="C:extracellular region"/>
    <property type="evidence" value="ECO:0007669"/>
    <property type="project" value="UniProtKB-SubCell"/>
</dbReference>
<dbReference type="GO" id="GO:0004867">
    <property type="term" value="F:serine-type endopeptidase inhibitor activity"/>
    <property type="evidence" value="ECO:0007669"/>
    <property type="project" value="UniProtKB-KW"/>
</dbReference>
<dbReference type="CDD" id="cd00104">
    <property type="entry name" value="KAZAL_FS"/>
    <property type="match status" value="1"/>
</dbReference>
<dbReference type="FunFam" id="3.30.60.30:FF:000037">
    <property type="entry name" value="Ovomucoid"/>
    <property type="match status" value="1"/>
</dbReference>
<dbReference type="Gene3D" id="3.30.60.30">
    <property type="match status" value="1"/>
</dbReference>
<dbReference type="InterPro" id="IPR051597">
    <property type="entry name" value="Bifunctional_prot_inhibitor"/>
</dbReference>
<dbReference type="InterPro" id="IPR002350">
    <property type="entry name" value="Kazal_dom"/>
</dbReference>
<dbReference type="InterPro" id="IPR036058">
    <property type="entry name" value="Kazal_dom_sf"/>
</dbReference>
<dbReference type="InterPro" id="IPR001239">
    <property type="entry name" value="Prot_inh_Kazal-m"/>
</dbReference>
<dbReference type="PANTHER" id="PTHR47729:SF1">
    <property type="entry name" value="OVOMUCOID-LIKE-RELATED"/>
    <property type="match status" value="1"/>
</dbReference>
<dbReference type="PANTHER" id="PTHR47729">
    <property type="entry name" value="SERINE PEPTIDASE INHIBITOR, KAZAL TYPE 2, TANDEM DUPLICATE 1-RELATED"/>
    <property type="match status" value="1"/>
</dbReference>
<dbReference type="Pfam" id="PF00050">
    <property type="entry name" value="Kazal_1"/>
    <property type="match status" value="1"/>
</dbReference>
<dbReference type="PRINTS" id="PR00290">
    <property type="entry name" value="KAZALINHBTR"/>
</dbReference>
<dbReference type="SMART" id="SM00280">
    <property type="entry name" value="KAZAL"/>
    <property type="match status" value="1"/>
</dbReference>
<dbReference type="SUPFAM" id="SSF100895">
    <property type="entry name" value="Kazal-type serine protease inhibitors"/>
    <property type="match status" value="1"/>
</dbReference>
<dbReference type="PROSITE" id="PS00282">
    <property type="entry name" value="KAZAL_1"/>
    <property type="match status" value="1"/>
</dbReference>
<dbReference type="PROSITE" id="PS51465">
    <property type="entry name" value="KAZAL_2"/>
    <property type="match status" value="1"/>
</dbReference>
<sequence>VATVDCSGYPKPACTMEYMPLCGSDNKTYGNKCNFCNAVVDSNGTLTLSHFGEC</sequence>
<proteinExistence type="evidence at protein level"/>
<evidence type="ECO:0000255" key="1">
    <source>
        <dbReference type="PROSITE-ProRule" id="PRU00798"/>
    </source>
</evidence>
<organism>
    <name type="scientific">Lophodytes cucullatus</name>
    <name type="common">Hooded merganser</name>
    <name type="synonym">Mergus cucullatus</name>
    <dbReference type="NCBI Taxonomy" id="279951"/>
    <lineage>
        <taxon>Eukaryota</taxon>
        <taxon>Metazoa</taxon>
        <taxon>Chordata</taxon>
        <taxon>Craniata</taxon>
        <taxon>Vertebrata</taxon>
        <taxon>Euteleostomi</taxon>
        <taxon>Archelosauria</taxon>
        <taxon>Archosauria</taxon>
        <taxon>Dinosauria</taxon>
        <taxon>Saurischia</taxon>
        <taxon>Theropoda</taxon>
        <taxon>Coelurosauria</taxon>
        <taxon>Aves</taxon>
        <taxon>Neognathae</taxon>
        <taxon>Galloanserae</taxon>
        <taxon>Anseriformes</taxon>
        <taxon>Anatidae</taxon>
        <taxon>Anatinae</taxon>
        <taxon>Lophodytes</taxon>
    </lineage>
</organism>
<reference key="1">
    <citation type="journal article" date="1987" name="Biochemistry">
        <title>Ovomucoid third domains from 100 avian species: isolation, sequences, and hypervariability of enzyme-inhibitor contact residues.</title>
        <authorList>
            <person name="Laskowski M. Jr."/>
            <person name="Kato I."/>
            <person name="Ardelt W."/>
            <person name="Cook J."/>
            <person name="Denton A."/>
            <person name="Empie M.W."/>
            <person name="Kohr W.J."/>
            <person name="Park S.J."/>
            <person name="Parks K."/>
            <person name="Schatzley B.L."/>
            <person name="Schoenberger O.L."/>
            <person name="Tashiro M."/>
            <person name="Vichot G."/>
            <person name="Whatley H.E."/>
            <person name="Wieczorek A."/>
            <person name="Wieczorek M."/>
        </authorList>
    </citation>
    <scope>PROTEIN SEQUENCE</scope>
</reference>
<comment type="subcellular location">
    <subcellularLocation>
        <location>Secreted</location>
    </subcellularLocation>
</comment>
<comment type="domain">
    <text>Avian ovomucoid consists of three homologous, tandem Kazal family inhibitory domains.</text>
</comment>
<keyword id="KW-0903">Direct protein sequencing</keyword>
<keyword id="KW-1015">Disulfide bond</keyword>
<keyword id="KW-0325">Glycoprotein</keyword>
<keyword id="KW-0646">Protease inhibitor</keyword>
<keyword id="KW-0677">Repeat</keyword>
<keyword id="KW-0964">Secreted</keyword>
<keyword id="KW-0722">Serine protease inhibitor</keyword>
<protein>
    <recommendedName>
        <fullName>Ovomucoid</fullName>
    </recommendedName>
</protein>